<dbReference type="EC" id="2.4.2.9" evidence="1"/>
<dbReference type="EMBL" id="CP000681">
    <property type="protein sequence ID" value="ABP75322.1"/>
    <property type="molecule type" value="Genomic_DNA"/>
</dbReference>
<dbReference type="SMR" id="A4Y5T9"/>
<dbReference type="STRING" id="319224.Sputcn32_1597"/>
<dbReference type="KEGG" id="spc:Sputcn32_1597"/>
<dbReference type="eggNOG" id="COG0035">
    <property type="taxonomic scope" value="Bacteria"/>
</dbReference>
<dbReference type="HOGENOM" id="CLU_067096_2_2_6"/>
<dbReference type="UniPathway" id="UPA00574">
    <property type="reaction ID" value="UER00636"/>
</dbReference>
<dbReference type="GO" id="GO:0005525">
    <property type="term" value="F:GTP binding"/>
    <property type="evidence" value="ECO:0007669"/>
    <property type="project" value="UniProtKB-KW"/>
</dbReference>
<dbReference type="GO" id="GO:0000287">
    <property type="term" value="F:magnesium ion binding"/>
    <property type="evidence" value="ECO:0007669"/>
    <property type="project" value="UniProtKB-UniRule"/>
</dbReference>
<dbReference type="GO" id="GO:0004845">
    <property type="term" value="F:uracil phosphoribosyltransferase activity"/>
    <property type="evidence" value="ECO:0007669"/>
    <property type="project" value="UniProtKB-UniRule"/>
</dbReference>
<dbReference type="GO" id="GO:0044206">
    <property type="term" value="P:UMP salvage"/>
    <property type="evidence" value="ECO:0007669"/>
    <property type="project" value="UniProtKB-UniRule"/>
</dbReference>
<dbReference type="GO" id="GO:0006223">
    <property type="term" value="P:uracil salvage"/>
    <property type="evidence" value="ECO:0007669"/>
    <property type="project" value="InterPro"/>
</dbReference>
<dbReference type="CDD" id="cd06223">
    <property type="entry name" value="PRTases_typeI"/>
    <property type="match status" value="1"/>
</dbReference>
<dbReference type="FunFam" id="3.40.50.2020:FF:000003">
    <property type="entry name" value="Uracil phosphoribosyltransferase"/>
    <property type="match status" value="1"/>
</dbReference>
<dbReference type="Gene3D" id="3.40.50.2020">
    <property type="match status" value="1"/>
</dbReference>
<dbReference type="HAMAP" id="MF_01218_B">
    <property type="entry name" value="Upp_B"/>
    <property type="match status" value="1"/>
</dbReference>
<dbReference type="InterPro" id="IPR000836">
    <property type="entry name" value="PRibTrfase_dom"/>
</dbReference>
<dbReference type="InterPro" id="IPR029057">
    <property type="entry name" value="PRTase-like"/>
</dbReference>
<dbReference type="InterPro" id="IPR034332">
    <property type="entry name" value="Upp_B"/>
</dbReference>
<dbReference type="InterPro" id="IPR050054">
    <property type="entry name" value="UPRTase/APRTase"/>
</dbReference>
<dbReference type="InterPro" id="IPR005765">
    <property type="entry name" value="Ura_phspho_trans"/>
</dbReference>
<dbReference type="NCBIfam" id="NF001097">
    <property type="entry name" value="PRK00129.1"/>
    <property type="match status" value="1"/>
</dbReference>
<dbReference type="NCBIfam" id="TIGR01091">
    <property type="entry name" value="upp"/>
    <property type="match status" value="1"/>
</dbReference>
<dbReference type="PANTHER" id="PTHR32315">
    <property type="entry name" value="ADENINE PHOSPHORIBOSYLTRANSFERASE"/>
    <property type="match status" value="1"/>
</dbReference>
<dbReference type="PANTHER" id="PTHR32315:SF4">
    <property type="entry name" value="URACIL PHOSPHORIBOSYLTRANSFERASE, CHLOROPLASTIC"/>
    <property type="match status" value="1"/>
</dbReference>
<dbReference type="Pfam" id="PF14681">
    <property type="entry name" value="UPRTase"/>
    <property type="match status" value="1"/>
</dbReference>
<dbReference type="SUPFAM" id="SSF53271">
    <property type="entry name" value="PRTase-like"/>
    <property type="match status" value="1"/>
</dbReference>
<comment type="function">
    <text evidence="1">Catalyzes the conversion of uracil and 5-phospho-alpha-D-ribose 1-diphosphate (PRPP) to UMP and diphosphate.</text>
</comment>
<comment type="catalytic activity">
    <reaction evidence="1">
        <text>UMP + diphosphate = 5-phospho-alpha-D-ribose 1-diphosphate + uracil</text>
        <dbReference type="Rhea" id="RHEA:13017"/>
        <dbReference type="ChEBI" id="CHEBI:17568"/>
        <dbReference type="ChEBI" id="CHEBI:33019"/>
        <dbReference type="ChEBI" id="CHEBI:57865"/>
        <dbReference type="ChEBI" id="CHEBI:58017"/>
        <dbReference type="EC" id="2.4.2.9"/>
    </reaction>
</comment>
<comment type="cofactor">
    <cofactor evidence="1">
        <name>Mg(2+)</name>
        <dbReference type="ChEBI" id="CHEBI:18420"/>
    </cofactor>
    <text evidence="1">Binds 1 Mg(2+) ion per subunit. The magnesium is bound as Mg-PRPP.</text>
</comment>
<comment type="activity regulation">
    <text evidence="1">Allosterically activated by GTP.</text>
</comment>
<comment type="pathway">
    <text evidence="1">Pyrimidine metabolism; UMP biosynthesis via salvage pathway; UMP from uracil: step 1/1.</text>
</comment>
<comment type="similarity">
    <text evidence="1">Belongs to the UPRTase family.</text>
</comment>
<proteinExistence type="inferred from homology"/>
<accession>A4Y5T9</accession>
<feature type="chain" id="PRO_1000053782" description="Uracil phosphoribosyltransferase">
    <location>
        <begin position="1"/>
        <end position="208"/>
    </location>
</feature>
<feature type="binding site" evidence="1">
    <location>
        <position position="78"/>
    </location>
    <ligand>
        <name>5-phospho-alpha-D-ribose 1-diphosphate</name>
        <dbReference type="ChEBI" id="CHEBI:58017"/>
    </ligand>
</feature>
<feature type="binding site" evidence="1">
    <location>
        <position position="103"/>
    </location>
    <ligand>
        <name>5-phospho-alpha-D-ribose 1-diphosphate</name>
        <dbReference type="ChEBI" id="CHEBI:58017"/>
    </ligand>
</feature>
<feature type="binding site" evidence="1">
    <location>
        <begin position="130"/>
        <end position="138"/>
    </location>
    <ligand>
        <name>5-phospho-alpha-D-ribose 1-diphosphate</name>
        <dbReference type="ChEBI" id="CHEBI:58017"/>
    </ligand>
</feature>
<feature type="binding site" evidence="1">
    <location>
        <position position="193"/>
    </location>
    <ligand>
        <name>uracil</name>
        <dbReference type="ChEBI" id="CHEBI:17568"/>
    </ligand>
</feature>
<feature type="binding site" evidence="1">
    <location>
        <begin position="198"/>
        <end position="200"/>
    </location>
    <ligand>
        <name>uracil</name>
        <dbReference type="ChEBI" id="CHEBI:17568"/>
    </ligand>
</feature>
<feature type="binding site" evidence="1">
    <location>
        <position position="199"/>
    </location>
    <ligand>
        <name>5-phospho-alpha-D-ribose 1-diphosphate</name>
        <dbReference type="ChEBI" id="CHEBI:58017"/>
    </ligand>
</feature>
<sequence length="208" mass="22570">MKVVEVKHPLVRHKIGLMREGDISTKRFRELAAEVGSLLTYEATADFETETVTIEGWNGPVEVDQIKGKKVTVVPILRAGLGMMDGVLEHIPSARISVVGIYRDEETLEPVPYFEKLASDMNERIALVVDPMLATGGSMIATVDLLKKRGCTSIKALVLVAAPEGIKALEAAHPDIELYTAAIDRCLNEKGYILPGLGDAGDKIFGTK</sequence>
<reference key="1">
    <citation type="submission" date="2007-04" db="EMBL/GenBank/DDBJ databases">
        <title>Complete sequence of Shewanella putrefaciens CN-32.</title>
        <authorList>
            <consortium name="US DOE Joint Genome Institute"/>
            <person name="Copeland A."/>
            <person name="Lucas S."/>
            <person name="Lapidus A."/>
            <person name="Barry K."/>
            <person name="Detter J.C."/>
            <person name="Glavina del Rio T."/>
            <person name="Hammon N."/>
            <person name="Israni S."/>
            <person name="Dalin E."/>
            <person name="Tice H."/>
            <person name="Pitluck S."/>
            <person name="Chain P."/>
            <person name="Malfatti S."/>
            <person name="Shin M."/>
            <person name="Vergez L."/>
            <person name="Schmutz J."/>
            <person name="Larimer F."/>
            <person name="Land M."/>
            <person name="Hauser L."/>
            <person name="Kyrpides N."/>
            <person name="Mikhailova N."/>
            <person name="Romine M.F."/>
            <person name="Fredrickson J."/>
            <person name="Tiedje J."/>
            <person name="Richardson P."/>
        </authorList>
    </citation>
    <scope>NUCLEOTIDE SEQUENCE [LARGE SCALE GENOMIC DNA]</scope>
    <source>
        <strain>CN-32 / ATCC BAA-453</strain>
    </source>
</reference>
<evidence type="ECO:0000255" key="1">
    <source>
        <dbReference type="HAMAP-Rule" id="MF_01218"/>
    </source>
</evidence>
<name>UPP_SHEPC</name>
<protein>
    <recommendedName>
        <fullName evidence="1">Uracil phosphoribosyltransferase</fullName>
        <ecNumber evidence="1">2.4.2.9</ecNumber>
    </recommendedName>
    <alternativeName>
        <fullName evidence="1">UMP pyrophosphorylase</fullName>
    </alternativeName>
    <alternativeName>
        <fullName evidence="1">UPRTase</fullName>
    </alternativeName>
</protein>
<organism>
    <name type="scientific">Shewanella putrefaciens (strain CN-32 / ATCC BAA-453)</name>
    <dbReference type="NCBI Taxonomy" id="319224"/>
    <lineage>
        <taxon>Bacteria</taxon>
        <taxon>Pseudomonadati</taxon>
        <taxon>Pseudomonadota</taxon>
        <taxon>Gammaproteobacteria</taxon>
        <taxon>Alteromonadales</taxon>
        <taxon>Shewanellaceae</taxon>
        <taxon>Shewanella</taxon>
    </lineage>
</organism>
<keyword id="KW-0021">Allosteric enzyme</keyword>
<keyword id="KW-0328">Glycosyltransferase</keyword>
<keyword id="KW-0342">GTP-binding</keyword>
<keyword id="KW-0460">Magnesium</keyword>
<keyword id="KW-0547">Nucleotide-binding</keyword>
<keyword id="KW-0808">Transferase</keyword>
<gene>
    <name evidence="1" type="primary">upp</name>
    <name type="ordered locus">Sputcn32_1597</name>
</gene>